<feature type="chain" id="PRO_0000219499" description="Isopenicillin N synthase">
    <location>
        <begin position="1"/>
        <end position="338"/>
    </location>
</feature>
<feature type="domain" description="Fe2OG dioxygenase" evidence="3">
    <location>
        <begin position="182"/>
        <end position="290"/>
    </location>
</feature>
<feature type="binding site" evidence="1">
    <location>
        <position position="89"/>
    </location>
    <ligand>
        <name>isopenicillin N</name>
        <dbReference type="ChEBI" id="CHEBI:58399"/>
    </ligand>
</feature>
<feature type="binding site" evidence="1">
    <location>
        <position position="89"/>
    </location>
    <ligand>
        <name>N-[(5S)-5-amino-5-carboxypentanoyl]-L-cysteinyl-D-valine</name>
        <dbReference type="ChEBI" id="CHEBI:58572"/>
    </ligand>
</feature>
<feature type="binding site" evidence="1">
    <location>
        <position position="93"/>
    </location>
    <ligand>
        <name>isopenicillin N</name>
        <dbReference type="ChEBI" id="CHEBI:58399"/>
    </ligand>
</feature>
<feature type="binding site" evidence="1">
    <location>
        <position position="93"/>
    </location>
    <ligand>
        <name>N-[(5S)-5-amino-5-carboxypentanoyl]-L-cysteinyl-D-valine</name>
        <dbReference type="ChEBI" id="CHEBI:58572"/>
    </ligand>
</feature>
<feature type="binding site" evidence="1">
    <location>
        <position position="185"/>
    </location>
    <ligand>
        <name>isopenicillin N</name>
        <dbReference type="ChEBI" id="CHEBI:58399"/>
    </ligand>
</feature>
<feature type="binding site" evidence="1">
    <location>
        <position position="185"/>
    </location>
    <ligand>
        <name>N-[(5S)-5-amino-5-carboxypentanoyl]-L-cysteinyl-D-valine</name>
        <dbReference type="ChEBI" id="CHEBI:58572"/>
    </ligand>
</feature>
<feature type="binding site" evidence="1">
    <location>
        <position position="191"/>
    </location>
    <ligand>
        <name>isopenicillin N</name>
        <dbReference type="ChEBI" id="CHEBI:58399"/>
    </ligand>
</feature>
<feature type="binding site" evidence="1">
    <location>
        <position position="191"/>
    </location>
    <ligand>
        <name>N-[(5S)-5-amino-5-carboxypentanoyl]-L-cysteinyl-D-valine</name>
        <dbReference type="ChEBI" id="CHEBI:58572"/>
    </ligand>
</feature>
<feature type="binding site" evidence="3">
    <location>
        <position position="216"/>
    </location>
    <ligand>
        <name>Fe(2+)</name>
        <dbReference type="ChEBI" id="CHEBI:29033"/>
    </ligand>
</feature>
<feature type="binding site" evidence="1">
    <location>
        <position position="216"/>
    </location>
    <ligand>
        <name>N-[(5S)-5-amino-5-carboxypentanoyl]-L-cysteinyl-D-valine</name>
        <dbReference type="ChEBI" id="CHEBI:58572"/>
    </ligand>
</feature>
<feature type="binding site" evidence="3">
    <location>
        <position position="218"/>
    </location>
    <ligand>
        <name>Fe(2+)</name>
        <dbReference type="ChEBI" id="CHEBI:29033"/>
    </ligand>
</feature>
<feature type="binding site" evidence="1">
    <location>
        <position position="218"/>
    </location>
    <ligand>
        <name>N-[(5S)-5-amino-5-carboxypentanoyl]-L-cysteinyl-D-valine</name>
        <dbReference type="ChEBI" id="CHEBI:58572"/>
    </ligand>
</feature>
<feature type="binding site" evidence="3">
    <location>
        <position position="272"/>
    </location>
    <ligand>
        <name>Fe(2+)</name>
        <dbReference type="ChEBI" id="CHEBI:29033"/>
    </ligand>
</feature>
<feature type="binding site" evidence="3">
    <location>
        <position position="281"/>
    </location>
    <ligand>
        <name>2-oxoglutarate</name>
        <dbReference type="ChEBI" id="CHEBI:16810"/>
    </ligand>
</feature>
<feature type="binding site" evidence="1">
    <location>
        <position position="283"/>
    </location>
    <ligand>
        <name>isopenicillin N</name>
        <dbReference type="ChEBI" id="CHEBI:58399"/>
    </ligand>
</feature>
<feature type="binding site" evidence="1">
    <location>
        <position position="283"/>
    </location>
    <ligand>
        <name>N-[(5S)-5-amino-5-carboxypentanoyl]-L-cysteinyl-D-valine</name>
        <dbReference type="ChEBI" id="CHEBI:58572"/>
    </ligand>
</feature>
<feature type="site" description="Transition state stabilizer" evidence="1">
    <location>
        <position position="213"/>
    </location>
</feature>
<feature type="site" description="Involved in ACV-binding">
    <location>
        <position position="283"/>
    </location>
</feature>
<feature type="sequence variant" description="In strain: N-2; inactive." evidence="5">
    <original>P</original>
    <variation>L</variation>
    <location>
        <position position="285"/>
    </location>
</feature>
<feature type="mutagenesis site" description="Strongly reduces the catalytic activity." evidence="7 9">
    <original>H</original>
    <variation>L</variation>
    <location>
        <position position="49"/>
    </location>
</feature>
<feature type="mutagenesis site" description="Reduces the catalytic activity." evidence="7 9">
    <original>H</original>
    <variation>L</variation>
    <location>
        <position position="64"/>
    </location>
</feature>
<feature type="mutagenesis site" description="Strongly reduces the catalytic activity." evidence="7 9">
    <original>H</original>
    <variation>L</variation>
    <location>
        <position position="116"/>
    </location>
</feature>
<feature type="mutagenesis site" description="Strongly reduces the catalytic activity." evidence="7 9">
    <original>H</original>
    <variation>L</variation>
    <location>
        <position position="126"/>
    </location>
</feature>
<feature type="mutagenesis site" description="Reduces the catalytic activity." evidence="7 9">
    <original>H</original>
    <variation>L</variation>
    <location>
        <position position="137"/>
    </location>
</feature>
<feature type="mutagenesis site" description="Impairs the catalytic activity." evidence="7 9">
    <original>H</original>
    <variation>L</variation>
    <location>
        <position position="216"/>
    </location>
</feature>
<feature type="mutagenesis site" description="Impairs the catalytic activity." evidence="8">
    <original>D</original>
    <variation>L</variation>
    <location>
        <position position="218"/>
    </location>
</feature>
<feature type="mutagenesis site" description="Does not affect the catalytic activity." evidence="11">
    <original>Q</original>
    <variation>L</variation>
    <location>
        <position position="227"/>
    </location>
</feature>
<feature type="mutagenesis site" description="Does not affect the catalytic activity." evidence="10 11">
    <original>Q</original>
    <variation>L</variation>
    <location>
        <position position="234"/>
    </location>
</feature>
<feature type="mutagenesis site" description="Impairs the catalytic activity." evidence="6 7 9">
    <original>H</original>
    <variation>L</variation>
    <location>
        <position position="272"/>
    </location>
</feature>
<feature type="mutagenesis site" description="Impairs the catalytic activity." evidence="12">
    <original>S</original>
    <variation>A</variation>
    <location>
        <position position="283"/>
    </location>
</feature>
<feature type="mutagenesis site" description="Does not affect the catalytic activity." evidence="11">
    <original>Q</original>
    <variation>L</variation>
    <location>
        <position position="337"/>
    </location>
</feature>
<feature type="sequence conflict" description="In Ref. 3; AA sequence." evidence="14" ref="3">
    <original>D</original>
    <variation>T</variation>
    <location>
        <position position="22"/>
    </location>
</feature>
<feature type="sequence conflict" description="In Ref. 2; AAA32674." evidence="14" ref="2">
    <original>S</original>
    <variation>F</variation>
    <location>
        <position position="177"/>
    </location>
</feature>
<name>IPNA_HAPCH</name>
<dbReference type="EC" id="1.21.3.1" evidence="5"/>
<dbReference type="EMBL" id="X03148">
    <property type="protein sequence ID" value="CAA26927.1"/>
    <property type="molecule type" value="Genomic_DNA"/>
</dbReference>
<dbReference type="EMBL" id="M33522">
    <property type="protein sequence ID" value="AAA32674.1"/>
    <property type="molecule type" value="Genomic_DNA"/>
</dbReference>
<dbReference type="PIR" id="S09312">
    <property type="entry name" value="S09312"/>
</dbReference>
<dbReference type="SMR" id="P05189"/>
<dbReference type="BioCyc" id="MetaCyc:MONOMER-13364"/>
<dbReference type="BRENDA" id="1.21.3.1">
    <property type="organism ID" value="114"/>
</dbReference>
<dbReference type="SABIO-RK" id="P05189"/>
<dbReference type="UniPathway" id="UPA00149">
    <property type="reaction ID" value="UER00240"/>
</dbReference>
<dbReference type="GO" id="GO:0005829">
    <property type="term" value="C:cytosol"/>
    <property type="evidence" value="ECO:0000250"/>
    <property type="project" value="GO_Central"/>
</dbReference>
<dbReference type="GO" id="GO:0005506">
    <property type="term" value="F:iron ion binding"/>
    <property type="evidence" value="ECO:0007669"/>
    <property type="project" value="InterPro"/>
</dbReference>
<dbReference type="GO" id="GO:0016216">
    <property type="term" value="F:isopenicillin-N synthase activity"/>
    <property type="evidence" value="ECO:0000314"/>
    <property type="project" value="GO_Central"/>
</dbReference>
<dbReference type="GO" id="GO:0042318">
    <property type="term" value="P:penicillin biosynthetic process"/>
    <property type="evidence" value="ECO:0000314"/>
    <property type="project" value="GO_Central"/>
</dbReference>
<dbReference type="Gene3D" id="2.60.120.330">
    <property type="entry name" value="B-lactam Antibiotic, Isopenicillin N Synthase, Chain"/>
    <property type="match status" value="1"/>
</dbReference>
<dbReference type="InterPro" id="IPR026992">
    <property type="entry name" value="DIOX_N"/>
</dbReference>
<dbReference type="InterPro" id="IPR044861">
    <property type="entry name" value="IPNS-like_FE2OG_OXY"/>
</dbReference>
<dbReference type="InterPro" id="IPR027443">
    <property type="entry name" value="IPNS-like_sf"/>
</dbReference>
<dbReference type="InterPro" id="IPR002057">
    <property type="entry name" value="Isopenicillin-N_synth_CS"/>
</dbReference>
<dbReference type="InterPro" id="IPR005123">
    <property type="entry name" value="Oxoglu/Fe-dep_dioxygenase_dom"/>
</dbReference>
<dbReference type="PANTHER" id="PTHR10209:SF867">
    <property type="entry name" value="2-OXOGLUTARATE (2OG) AND FE(II)-DEPENDENT OXYGENASE SUPERFAMILY PROTEIN"/>
    <property type="match status" value="1"/>
</dbReference>
<dbReference type="PANTHER" id="PTHR10209">
    <property type="entry name" value="OXIDOREDUCTASE, 2OG-FE II OXYGENASE FAMILY PROTEIN"/>
    <property type="match status" value="1"/>
</dbReference>
<dbReference type="Pfam" id="PF03171">
    <property type="entry name" value="2OG-FeII_Oxy"/>
    <property type="match status" value="1"/>
</dbReference>
<dbReference type="Pfam" id="PF14226">
    <property type="entry name" value="DIOX_N"/>
    <property type="match status" value="1"/>
</dbReference>
<dbReference type="PRINTS" id="PR00682">
    <property type="entry name" value="IPNSYNTHASE"/>
</dbReference>
<dbReference type="SUPFAM" id="SSF51197">
    <property type="entry name" value="Clavaminate synthase-like"/>
    <property type="match status" value="1"/>
</dbReference>
<dbReference type="PROSITE" id="PS51471">
    <property type="entry name" value="FE2OG_OXY"/>
    <property type="match status" value="1"/>
</dbReference>
<dbReference type="PROSITE" id="PS00185">
    <property type="entry name" value="IPNS_1"/>
    <property type="match status" value="1"/>
</dbReference>
<dbReference type="PROSITE" id="PS00186">
    <property type="entry name" value="IPNS_2"/>
    <property type="match status" value="1"/>
</dbReference>
<organism>
    <name type="scientific">Hapsidospora chrysogena</name>
    <name type="common">Acremonium chrysogenum</name>
    <dbReference type="NCBI Taxonomy" id="5044"/>
    <lineage>
        <taxon>Eukaryota</taxon>
        <taxon>Fungi</taxon>
        <taxon>Dikarya</taxon>
        <taxon>Ascomycota</taxon>
        <taxon>Pezizomycotina</taxon>
        <taxon>Sordariomycetes</taxon>
        <taxon>Hypocreomycetidae</taxon>
        <taxon>Hypocreales</taxon>
        <taxon>Bionectriaceae</taxon>
        <taxon>Hapsidospora</taxon>
    </lineage>
</organism>
<protein>
    <recommendedName>
        <fullName evidence="13">Isopenicillin N synthase</fullName>
        <shortName evidence="13">IPNS</shortName>
        <ecNumber evidence="5">1.21.3.1</ecNumber>
    </recommendedName>
</protein>
<sequence>MGSVPVPVANVPRIDVSPLFGDDKEKKLEVARAIDAASRDTGFFYAVNHGVDLPWLSRETNKFHMSITDEEKWQLAIRAYNKEHESQIRAGYYLPIPGKKAVESFCYLNPSFSPDHPRIKEPTPMHEVNVWPDEAKHPGFRAFAEKYYWDVFGLSSAVLRGYALALGRDEDFFTRHSRRDTTLSSVVLIRYPYLDPYPEPAIKTADDGTKLSFEWHEDVSLITVLYQSDVQNLQVKTPQGWQDIQADDTGFLINCGSYMAHITDDYYPAPIHRVKWVNEERQSLPFFVNLGWEDTIQPWDPATAKDGAKDAAKDKPAISYGEYLQGGLRGLINKNGQT</sequence>
<accession>P05189</accession>
<accession>Q00047</accession>
<keyword id="KW-0045">Antibiotic biosynthesis</keyword>
<keyword id="KW-0963">Cytoplasm</keyword>
<keyword id="KW-0903">Direct protein sequencing</keyword>
<keyword id="KW-0408">Iron</keyword>
<keyword id="KW-0479">Metal-binding</keyword>
<keyword id="KW-0560">Oxidoreductase</keyword>
<gene>
    <name type="primary">PCBC</name>
    <name type="synonym">IPS</name>
</gene>
<evidence type="ECO:0000250" key="1">
    <source>
        <dbReference type="UniProtKB" id="P05326"/>
    </source>
</evidence>
<evidence type="ECO:0000250" key="2">
    <source>
        <dbReference type="UniProtKB" id="P08703"/>
    </source>
</evidence>
<evidence type="ECO:0000255" key="3">
    <source>
        <dbReference type="PROSITE-ProRule" id="PRU00805"/>
    </source>
</evidence>
<evidence type="ECO:0000269" key="4">
    <source>
    </source>
</evidence>
<evidence type="ECO:0000269" key="5">
    <source>
    </source>
</evidence>
<evidence type="ECO:0000269" key="6">
    <source>
    </source>
</evidence>
<evidence type="ECO:0000269" key="7">
    <source>
    </source>
</evidence>
<evidence type="ECO:0000269" key="8">
    <source>
    </source>
</evidence>
<evidence type="ECO:0000269" key="9">
    <source>
    </source>
</evidence>
<evidence type="ECO:0000269" key="10">
    <source>
    </source>
</evidence>
<evidence type="ECO:0000269" key="11">
    <source>
    </source>
</evidence>
<evidence type="ECO:0000269" key="12">
    <source>
    </source>
</evidence>
<evidence type="ECO:0000303" key="13">
    <source>
    </source>
</evidence>
<evidence type="ECO:0000305" key="14"/>
<proteinExistence type="evidence at protein level"/>
<reference key="1">
    <citation type="journal article" date="1985" name="Nature">
        <title>Isolation, sequence determination and expression in Escherichia coli of the isopenicillin N synthetase gene from Cephalosporium acremonium.</title>
        <authorList>
            <person name="Samson S.N."/>
            <person name="Belagaje R."/>
            <person name="Blankenship D.T."/>
            <person name="Chapman J.L."/>
            <person name="Perry D."/>
            <person name="Skatrud P.L."/>
            <person name="Vanfrank R.M."/>
            <person name="Abraham E.P."/>
            <person name="Baldwin J.E."/>
            <person name="Queener S.W."/>
            <person name="Ingolia T.D."/>
        </authorList>
    </citation>
    <scope>NUCLEOTIDE SEQUENCE [GENOMIC DNA]</scope>
    <scope>FUNCTION</scope>
    <scope>CATALYTIC ACTIVITY</scope>
    <scope>PATHWAY</scope>
</reference>
<reference key="2">
    <citation type="journal article" date="1989" name="Gene">
        <title>Characterization of a loss-of-function mutation in the isopenicillin N synthetase gene of Acremonium chrysogenum.</title>
        <authorList>
            <person name="Ramsden M."/>
            <person name="McQuade B.A."/>
            <person name="Saunders K."/>
            <person name="Turner M.K."/>
            <person name="Harford S."/>
        </authorList>
    </citation>
    <scope>NUCLEOTIDE SEQUENCE [GENOMIC DNA]</scope>
    <source>
        <strain>N-2</strain>
    </source>
</reference>
<reference key="3">
    <citation type="journal article" date="1985" name="FEBS Lett.">
        <title>N-terminal amino acid sequence and some properties of isopenicillin-N synthetase from Cephalosporium acremonium.</title>
        <authorList>
            <person name="Baldwin J.E."/>
            <person name="Gagnon J."/>
            <person name="Ting H.H."/>
        </authorList>
    </citation>
    <scope>PROTEIN SEQUENCE OF 3-52</scope>
    <scope>SUBUNIT</scope>
    <scope>COFACTOR</scope>
    <scope>FUNCTION</scope>
    <scope>CATALYTIC ACTIVITY</scope>
    <source>
        <strain>ATCC 60777 / IMI 237183</strain>
    </source>
</reference>
<reference key="4">
    <citation type="journal article" date="1990" name="Biochem. J.">
        <title>Photoaffinity labelling of isopenicillin N synthetase.</title>
        <authorList>
            <person name="Baldwin J.E."/>
            <person name="Coates J.B."/>
            <person name="Moloney M.G."/>
            <person name="Pratt A.J."/>
            <person name="Willis A.C."/>
        </authorList>
    </citation>
    <scope>PROTEIN SEQUENCE OF 40-78 AND 237-264</scope>
    <scope>PHOTOAFFINITY LABELLING</scope>
</reference>
<reference key="5">
    <citation type="journal article" date="1994" name="FEMS Microbiol. Lett.">
        <title>Histidine-272 of isopenicillin N synthase of Cephalosporium acremonium, which is possibly involved in iron binding, is essential for its catalytic activity.</title>
        <authorList>
            <person name="Tiow-Suan S."/>
            <person name="Tan D.S."/>
        </authorList>
    </citation>
    <scope>MUTAGENESIS OF HIS-272</scope>
    <scope>FUNCTION</scope>
    <scope>CATALYTIC ACTIVITY</scope>
</reference>
<reference key="6">
    <citation type="journal article" date="1996" name="J. Biol. Chem.">
        <title>Functional analysis of conserved histidine residues in Cephalosporium acremonium isopenicillin N synthase by site-directed mutagenesis.</title>
        <authorList>
            <person name="Tan D.S."/>
            <person name="Sim T.S."/>
        </authorList>
    </citation>
    <scope>FUNCTION</scope>
    <scope>CATALYTIC ACTIVITY</scope>
    <scope>MUTAGENESIS OF HIS-49; HIS-64; HIS-116; HIS-126; HIS-137; HIS-216 AND HIS-272</scope>
</reference>
<reference key="7">
    <citation type="journal article" date="1997" name="FEMS Microbiol. Lett.">
        <title>Functional analysis of a conserved aspartate D218 in Cephalosporium acremonium isopenicillin N synthase.</title>
        <authorList>
            <person name="Loke P."/>
            <person name="Sim J."/>
            <person name="Sim T.S."/>
        </authorList>
    </citation>
    <scope>FUNCTION</scope>
    <scope>CATALYTIC ACTIVITY</scope>
    <scope>MUTAGENESIS OF ASP-218</scope>
</reference>
<reference key="8">
    <citation type="journal article" date="1998" name="Biochem. Biophys. Res. Commun.">
        <title>Catalytic activity in Cephalosporium acremonium isopenicillin N synthase does not involve glutamine-234.</title>
        <authorList>
            <person name="Loke P."/>
            <person name="Sim T.S."/>
        </authorList>
    </citation>
    <scope>FUNCTION</scope>
    <scope>CATALYTIC ACTIVITY</scope>
    <scope>MUTAGENESIS OF GLN-234</scope>
</reference>
<reference key="9">
    <citation type="journal article" date="1998" name="Biochem. Biophys. Res. Commun.">
        <title>Analysis of glutamines in catalysis in Cephalosporium acremonium isopenicillin N synthase by site-directed mutagenesis.</title>
        <authorList>
            <person name="Loke P."/>
            <person name="Sim T.S."/>
        </authorList>
    </citation>
    <scope>FUNCTION</scope>
    <scope>CATALYTIC ACTIVITY</scope>
    <scope>MUTAGENESIS OF GLN-227; GLN-234 AND GLN-337</scope>
</reference>
<reference key="10">
    <citation type="journal article" date="1998" name="Biochem. Mol. Biol. Int.">
        <title>Involvement of a third histidine in the ferrous active site of isopenicillin N synthase of Cephalosporium acremonium repudiated by recombinant double histidine mutants.</title>
        <authorList>
            <person name="Tan D.S."/>
            <person name="Ang S.G."/>
            <person name="Sim T.S."/>
        </authorList>
    </citation>
    <scope>FUNCTION</scope>
    <scope>CATALYTIC ACTIVITY</scope>
    <scope>MUTAGENESIS OF HIS-49; HIS-64; HIS-116; HIS-126; HIS-137; HIS-216 AND HIS-272</scope>
</reference>
<reference key="11">
    <citation type="journal article" date="1998" name="FEMS Microbiol. Lett.">
        <title>Mutational evidence for the role of serine-283 in Cephalosporium acremonium isopenicillin N synthase.</title>
        <authorList>
            <person name="Loke P."/>
            <person name="Sim T.S."/>
        </authorList>
    </citation>
    <scope>FUNCTION</scope>
    <scope>CATALYTIC ACTIVITY</scope>
    <scope>MUTAGENESIS OF SER-283</scope>
</reference>
<comment type="function">
    <text evidence="2 4 5 6 7 8 9 10 11 12">Isopenicillin N synthase; part of the gene cluster that mediates the biosynthesis of penicillin, the world's most important antibiotic (PubMed:3903520). IpnA catalyzes the cyclization of the tripeptide N-[(5S)-5-amino-5-carboxypentanoyl]-L-cysteinyl-D-valine (LLD-ACV or ACV) to form isopenicillin N (IPN) that contains the beta-lactam nucleus (PubMed:3839755, PubMed:3903520, PubMed:8076799, PubMed:8557701, PubMed:9418249, PubMed:9530516, PubMed:9703965, PubMed:9826554, PubMed:9841222). The penicillin biosynthesis occurs via 3 enzymatic steps, the first corresponding to the production of the tripeptide N-[(5S)-5-amino-5-carboxypentanoyl]-L-cysteinyl-D-valine (LLD-ACV or ACV) by the NRPS pcbAB. The tripeptide ACV is then cyclized to isopenicillin N (IPN) by the isopenicillin N synthase pcbC that forms the beta-lactam nucleus. Finally, the alpha-aminoadipyl side chain is exchanged for phenylacetic acid by the isopenicillin N acyltransferase penDE to yield penicillin in the peroxisomal matrix (By similarity).</text>
</comment>
<comment type="catalytic activity">
    <reaction evidence="4 5 6 7 8 9 10 11 12">
        <text>N-[(5S)-5-amino-5-carboxypentanoyl]-L-cysteinyl-D-valine + O2 = isopenicillin N + 2 H2O</text>
        <dbReference type="Rhea" id="RHEA:22428"/>
        <dbReference type="ChEBI" id="CHEBI:15377"/>
        <dbReference type="ChEBI" id="CHEBI:15379"/>
        <dbReference type="ChEBI" id="CHEBI:58399"/>
        <dbReference type="ChEBI" id="CHEBI:58572"/>
        <dbReference type="EC" id="1.21.3.1"/>
    </reaction>
    <physiologicalReaction direction="left-to-right" evidence="4 5 6 7 8 9 10 11 12">
        <dbReference type="Rhea" id="RHEA:22429"/>
    </physiologicalReaction>
</comment>
<comment type="cofactor">
    <cofactor evidence="3 4">
        <name>Fe(2+)</name>
        <dbReference type="ChEBI" id="CHEBI:29033"/>
    </cofactor>
    <text evidence="3">Binds 1 Fe(2+) ion per subunit.</text>
</comment>
<comment type="pathway">
    <text evidence="5">Antibiotic biosynthesis; penicillin G biosynthesis; penicillin G from L-alpha-aminoadipate and L-cysteine and L-valine: step 2/3.</text>
</comment>
<comment type="subunit">
    <text evidence="4">Monomer.</text>
</comment>
<comment type="subcellular location">
    <subcellularLocation>
        <location evidence="2">Cytoplasm</location>
        <location evidence="2">Cytosol</location>
    </subcellularLocation>
</comment>
<comment type="similarity">
    <text evidence="14">Belongs to the iron/ascorbate-dependent oxidoreductase family.</text>
</comment>